<gene>
    <name type="primary">arsA</name>
</gene>
<accession>P52145</accession>
<keyword id="KW-0059">Arsenical resistance</keyword>
<keyword id="KW-0067">ATP-binding</keyword>
<keyword id="KW-0547">Nucleotide-binding</keyword>
<keyword id="KW-0614">Plasmid</keyword>
<keyword id="KW-1278">Translocase</keyword>
<feature type="chain" id="PRO_0000152252" description="Arsenical pump-driving ATPase">
    <location>
        <begin position="1"/>
        <end position="583"/>
    </location>
</feature>
<feature type="binding site" evidence="1">
    <location>
        <begin position="15"/>
        <end position="22"/>
    </location>
    <ligand>
        <name>ATP</name>
        <dbReference type="ChEBI" id="CHEBI:30616"/>
    </ligand>
</feature>
<feature type="binding site" evidence="1">
    <location>
        <begin position="334"/>
        <end position="341"/>
    </location>
    <ligand>
        <name>ATP</name>
        <dbReference type="ChEBI" id="CHEBI:30616"/>
    </ligand>
</feature>
<geneLocation type="plasmid">
    <name>IncN R46</name>
</geneLocation>
<comment type="function">
    <text>Anion-transporting ATPase. Catalyzes the extrusion of the oxyanions arsenite, antimonite and arsenate. Maintenance of a low intracellular concentration of oxyanion produces resistance to the toxic agents.</text>
</comment>
<comment type="catalytic activity">
    <reaction>
        <text>arsenite(in) + ATP + H2O = arsenite(out) + ADP + phosphate + H(+)</text>
        <dbReference type="Rhea" id="RHEA:11348"/>
        <dbReference type="ChEBI" id="CHEBI:15377"/>
        <dbReference type="ChEBI" id="CHEBI:15378"/>
        <dbReference type="ChEBI" id="CHEBI:29242"/>
        <dbReference type="ChEBI" id="CHEBI:30616"/>
        <dbReference type="ChEBI" id="CHEBI:43474"/>
        <dbReference type="ChEBI" id="CHEBI:456216"/>
        <dbReference type="EC" id="7.3.2.7"/>
    </reaction>
</comment>
<comment type="similarity">
    <text evidence="2">Belongs to the arsA ATPase family.</text>
</comment>
<dbReference type="EC" id="7.3.2.7"/>
<dbReference type="EMBL" id="U38947">
    <property type="protein sequence ID" value="AAB09626.1"/>
    <property type="molecule type" value="Genomic_DNA"/>
</dbReference>
<dbReference type="SMR" id="P52145"/>
<dbReference type="KEGG" id="ag:AAB09626"/>
<dbReference type="GO" id="GO:0005524">
    <property type="term" value="F:ATP binding"/>
    <property type="evidence" value="ECO:0007669"/>
    <property type="project" value="UniProtKB-KW"/>
</dbReference>
<dbReference type="GO" id="GO:0016887">
    <property type="term" value="F:ATP hydrolysis activity"/>
    <property type="evidence" value="ECO:0007669"/>
    <property type="project" value="InterPro"/>
</dbReference>
<dbReference type="GO" id="GO:0015446">
    <property type="term" value="F:ATPase-coupled arsenite transmembrane transporter activity"/>
    <property type="evidence" value="ECO:0007669"/>
    <property type="project" value="UniProtKB-EC"/>
</dbReference>
<dbReference type="CDD" id="cd02035">
    <property type="entry name" value="ArsA"/>
    <property type="match status" value="2"/>
</dbReference>
<dbReference type="Gene3D" id="3.40.50.300">
    <property type="entry name" value="P-loop containing nucleotide triphosphate hydrolases"/>
    <property type="match status" value="2"/>
</dbReference>
<dbReference type="InterPro" id="IPR025723">
    <property type="entry name" value="Anion-transp_ATPase-like_dom"/>
</dbReference>
<dbReference type="InterPro" id="IPR027541">
    <property type="entry name" value="Ars_ATPase"/>
</dbReference>
<dbReference type="InterPro" id="IPR016300">
    <property type="entry name" value="ATPase_ArsA/GET3"/>
</dbReference>
<dbReference type="InterPro" id="IPR027417">
    <property type="entry name" value="P-loop_NTPase"/>
</dbReference>
<dbReference type="NCBIfam" id="TIGR04291">
    <property type="entry name" value="arsen_driv_ArsA"/>
    <property type="match status" value="1"/>
</dbReference>
<dbReference type="NCBIfam" id="TIGR00345">
    <property type="entry name" value="GET3_arsA_TRC40"/>
    <property type="match status" value="1"/>
</dbReference>
<dbReference type="PANTHER" id="PTHR10803">
    <property type="entry name" value="ARSENICAL PUMP-DRIVING ATPASE ARSENITE-TRANSLOCATING ATPASE"/>
    <property type="match status" value="1"/>
</dbReference>
<dbReference type="PANTHER" id="PTHR10803:SF3">
    <property type="entry name" value="ATPASE GET3"/>
    <property type="match status" value="1"/>
</dbReference>
<dbReference type="Pfam" id="PF02374">
    <property type="entry name" value="ArsA_ATPase"/>
    <property type="match status" value="3"/>
</dbReference>
<dbReference type="PIRSF" id="PIRSF001327">
    <property type="entry name" value="Arsenical_pump-driving_ATPase"/>
    <property type="match status" value="1"/>
</dbReference>
<dbReference type="SUPFAM" id="SSF52540">
    <property type="entry name" value="P-loop containing nucleoside triphosphate hydrolases"/>
    <property type="match status" value="2"/>
</dbReference>
<sequence>MKFLENIPSYLFFTGKGGVGKTSISCATAIRLAELGKRVLLVSTDPASNVGQVFDQTIGNTIQPVTAVSGLSALEIDPQDAAQQYRARIVDPIIGLLPDDVVNSISEQLSGACTTEIAAFDEFTGLLTDASLLTRFDHIIFDTAPTGHTIRLLQLPGAWSSFIESNPDGASCLGPMAGLEKQREQYAHAVEALSDPERTRLVLVARLQKSTLQEVARTHDELSAIGLKNQYLVINGVLPASEEKRDALAAAIWQREQEALANLPAGLSDLPTDNLYLQPLNMVGVSALKGLLNEHAEITSLPEQSPQNKPENMSLSVLVDDIARSEHGLIMLMGKGGVGKTTMAAAIAVSLADKGFNVHLTTSDPAAHLSTTLNGSLKNLQVSRINPHDETERYRQHVLETKGRDLDEAGKRLLEEDLRSPCTEEIAVFQAFSRVIREAGKRFVVMDTAPTGHTLLLLDATGAYHREIARKMGDKGHFTTPMMQLQDQERTKVLLVTLPETTPVLEAANLQSDLERAGIHPWGWIINNSLWIAQTQSPLLCQRALQERPQIEVVKNQHASRIALVPVMAAEPTGIEKLRELVV</sequence>
<protein>
    <recommendedName>
        <fullName>Arsenical pump-driving ATPase</fullName>
        <ecNumber>7.3.2.7</ecNumber>
    </recommendedName>
    <alternativeName>
        <fullName>Arsenical resistance ATPase</fullName>
    </alternativeName>
    <alternativeName>
        <fullName>Arsenite-translocating ATPase</fullName>
    </alternativeName>
    <alternativeName>
        <fullName>Arsenite-transporting ATPase</fullName>
    </alternativeName>
</protein>
<evidence type="ECO:0000255" key="1"/>
<evidence type="ECO:0000305" key="2"/>
<proteinExistence type="inferred from homology"/>
<name>ARSA2_ECOLX</name>
<organism>
    <name type="scientific">Escherichia coli</name>
    <dbReference type="NCBI Taxonomy" id="562"/>
    <lineage>
        <taxon>Bacteria</taxon>
        <taxon>Pseudomonadati</taxon>
        <taxon>Pseudomonadota</taxon>
        <taxon>Gammaproteobacteria</taxon>
        <taxon>Enterobacterales</taxon>
        <taxon>Enterobacteriaceae</taxon>
        <taxon>Escherichia</taxon>
    </lineage>
</organism>
<reference key="1">
    <citation type="journal article" date="1996" name="FEMS Microbiol. Lett.">
        <title>The arsenical resistance operon of IncN plasmid R46.</title>
        <authorList>
            <person name="Bruhn D.F."/>
            <person name="Li J."/>
            <person name="Silver S."/>
            <person name="Roberto F."/>
            <person name="Rosen B.P."/>
        </authorList>
    </citation>
    <scope>NUCLEOTIDE SEQUENCE [GENOMIC DNA]</scope>
</reference>